<dbReference type="EMBL" id="CU928161">
    <property type="protein sequence ID" value="CAR01466.1"/>
    <property type="molecule type" value="Genomic_DNA"/>
</dbReference>
<dbReference type="RefSeq" id="WP_000014320.1">
    <property type="nucleotide sequence ID" value="NC_011742.1"/>
</dbReference>
<dbReference type="SMR" id="B7MAM0"/>
<dbReference type="GeneID" id="75169997"/>
<dbReference type="KEGG" id="ecz:ECS88_0101"/>
<dbReference type="HOGENOM" id="CLU_108853_0_0_6"/>
<dbReference type="Proteomes" id="UP000000747">
    <property type="component" value="Chromosome"/>
</dbReference>
<dbReference type="GO" id="GO:0005829">
    <property type="term" value="C:cytosol"/>
    <property type="evidence" value="ECO:0007669"/>
    <property type="project" value="UniProtKB-SubCell"/>
</dbReference>
<dbReference type="GO" id="GO:0042597">
    <property type="term" value="C:periplasmic space"/>
    <property type="evidence" value="ECO:0007669"/>
    <property type="project" value="UniProtKB-SubCell"/>
</dbReference>
<dbReference type="GO" id="GO:0045182">
    <property type="term" value="F:translation regulator activity"/>
    <property type="evidence" value="ECO:0007669"/>
    <property type="project" value="InterPro"/>
</dbReference>
<dbReference type="HAMAP" id="MF_01332">
    <property type="entry name" value="SecM"/>
    <property type="match status" value="1"/>
</dbReference>
<dbReference type="InterPro" id="IPR009502">
    <property type="entry name" value="SecM"/>
</dbReference>
<dbReference type="NCBIfam" id="NF002799">
    <property type="entry name" value="PRK02943.1-1"/>
    <property type="match status" value="1"/>
</dbReference>
<dbReference type="Pfam" id="PF06558">
    <property type="entry name" value="SecM"/>
    <property type="match status" value="1"/>
</dbReference>
<dbReference type="PIRSF" id="PIRSF004572">
    <property type="entry name" value="SecM"/>
    <property type="match status" value="1"/>
</dbReference>
<sequence>MSGILTRWRQFGKRYFWPHLLLGMVAASLGLPALSNAAEPNAPAKATTRNHEPSAKVNFGQLALLEANTRRPNSNYSVDYWHQHAIRTVIRHLSFAMAPQTLPVAEESLPLQAQHLALLDTLSALLTQEGTPSEKGYRIDYAHFTPQAKFSTPVWISQAQGIRAGPQRLS</sequence>
<protein>
    <recommendedName>
        <fullName evidence="1">Secretion monitor</fullName>
    </recommendedName>
</protein>
<proteinExistence type="inferred from homology"/>
<feature type="signal peptide" evidence="1">
    <location>
        <begin position="1"/>
        <end position="37"/>
    </location>
</feature>
<feature type="chain" id="PRO_1000142334" description="Secretion monitor">
    <location>
        <begin position="38"/>
        <end position="170"/>
    </location>
</feature>
<accession>B7MAM0</accession>
<name>SECM_ECO45</name>
<evidence type="ECO:0000255" key="1">
    <source>
        <dbReference type="HAMAP-Rule" id="MF_01332"/>
    </source>
</evidence>
<reference key="1">
    <citation type="journal article" date="2009" name="PLoS Genet.">
        <title>Organised genome dynamics in the Escherichia coli species results in highly diverse adaptive paths.</title>
        <authorList>
            <person name="Touchon M."/>
            <person name="Hoede C."/>
            <person name="Tenaillon O."/>
            <person name="Barbe V."/>
            <person name="Baeriswyl S."/>
            <person name="Bidet P."/>
            <person name="Bingen E."/>
            <person name="Bonacorsi S."/>
            <person name="Bouchier C."/>
            <person name="Bouvet O."/>
            <person name="Calteau A."/>
            <person name="Chiapello H."/>
            <person name="Clermont O."/>
            <person name="Cruveiller S."/>
            <person name="Danchin A."/>
            <person name="Diard M."/>
            <person name="Dossat C."/>
            <person name="Karoui M.E."/>
            <person name="Frapy E."/>
            <person name="Garry L."/>
            <person name="Ghigo J.M."/>
            <person name="Gilles A.M."/>
            <person name="Johnson J."/>
            <person name="Le Bouguenec C."/>
            <person name="Lescat M."/>
            <person name="Mangenot S."/>
            <person name="Martinez-Jehanne V."/>
            <person name="Matic I."/>
            <person name="Nassif X."/>
            <person name="Oztas S."/>
            <person name="Petit M.A."/>
            <person name="Pichon C."/>
            <person name="Rouy Z."/>
            <person name="Ruf C.S."/>
            <person name="Schneider D."/>
            <person name="Tourret J."/>
            <person name="Vacherie B."/>
            <person name="Vallenet D."/>
            <person name="Medigue C."/>
            <person name="Rocha E.P.C."/>
            <person name="Denamur E."/>
        </authorList>
    </citation>
    <scope>NUCLEOTIDE SEQUENCE [LARGE SCALE GENOMIC DNA]</scope>
    <source>
        <strain>S88 / ExPEC</strain>
    </source>
</reference>
<comment type="function">
    <text evidence="1">Regulates secA expression by translational coupling of the secM secA operon. Translational pausing at a specific Pro residue 5 residues before the end of the protein may allow disruption of a mRNA repressor helix that normally suppresses secA translation initiation.</text>
</comment>
<comment type="subcellular location">
    <subcellularLocation>
        <location evidence="1">Cytoplasm</location>
        <location evidence="1">Cytosol</location>
    </subcellularLocation>
    <subcellularLocation>
        <location evidence="1">Periplasm</location>
    </subcellularLocation>
    <text evidence="1">The active form is cytosolic, while the periplasmic form is rapidly degraded, mainly by the tail-specific protease.</text>
</comment>
<comment type="similarity">
    <text evidence="1">Belongs to the SecM family.</text>
</comment>
<keyword id="KW-0963">Cytoplasm</keyword>
<keyword id="KW-0574">Periplasm</keyword>
<keyword id="KW-1185">Reference proteome</keyword>
<keyword id="KW-0732">Signal</keyword>
<gene>
    <name evidence="1" type="primary">secM</name>
    <name type="ordered locus">ECS88_0101</name>
</gene>
<organism>
    <name type="scientific">Escherichia coli O45:K1 (strain S88 / ExPEC)</name>
    <dbReference type="NCBI Taxonomy" id="585035"/>
    <lineage>
        <taxon>Bacteria</taxon>
        <taxon>Pseudomonadati</taxon>
        <taxon>Pseudomonadota</taxon>
        <taxon>Gammaproteobacteria</taxon>
        <taxon>Enterobacterales</taxon>
        <taxon>Enterobacteriaceae</taxon>
        <taxon>Escherichia</taxon>
    </lineage>
</organism>